<reference key="1">
    <citation type="journal article" date="1987" name="Cell">
        <title>The circumsporozoite gene of the Plasmodium cynomolgi complex.</title>
        <authorList>
            <person name="Galinski M.R."/>
            <person name="Arnot D.E."/>
            <person name="Cochrane A.H."/>
            <person name="Barnwell J.W."/>
            <person name="Nussenzweig R.S."/>
            <person name="Enea V."/>
        </authorList>
    </citation>
    <scope>NUCLEOTIDE SEQUENCE [GENOMIC DNA]</scope>
    <scope>POLYMORPHISM</scope>
    <scope>REPEATS</scope>
</reference>
<gene>
    <name evidence="3" type="primary">CSP</name>
</gene>
<keyword id="KW-1003">Cell membrane</keyword>
<keyword id="KW-0963">Cytoplasm</keyword>
<keyword id="KW-1015">Disulfide bond</keyword>
<keyword id="KW-0325">Glycoprotein</keyword>
<keyword id="KW-0336">GPI-anchor</keyword>
<keyword id="KW-0449">Lipoprotein</keyword>
<keyword id="KW-0461">Malaria</keyword>
<keyword id="KW-0472">Membrane</keyword>
<keyword id="KW-0677">Repeat</keyword>
<keyword id="KW-0732">Signal</keyword>
<keyword id="KW-0748">Sporozoite</keyword>
<evidence type="ECO:0000250" key="1">
    <source>
        <dbReference type="UniProtKB" id="P02893"/>
    </source>
</evidence>
<evidence type="ECO:0000250" key="2">
    <source>
        <dbReference type="UniProtKB" id="P19597"/>
    </source>
</evidence>
<evidence type="ECO:0000250" key="3">
    <source>
        <dbReference type="UniProtKB" id="P23093"/>
    </source>
</evidence>
<evidence type="ECO:0000250" key="4">
    <source>
        <dbReference type="UniProtKB" id="Q7K740"/>
    </source>
</evidence>
<evidence type="ECO:0000255" key="5"/>
<evidence type="ECO:0000255" key="6">
    <source>
        <dbReference type="PROSITE-ProRule" id="PRU00210"/>
    </source>
</evidence>
<evidence type="ECO:0000256" key="7">
    <source>
        <dbReference type="SAM" id="MobiDB-lite"/>
    </source>
</evidence>
<evidence type="ECO:0000269" key="8">
    <source>
    </source>
</evidence>
<evidence type="ECO:0000303" key="9">
    <source>
    </source>
</evidence>
<evidence type="ECO:0000305" key="10"/>
<evidence type="ECO:0000305" key="11">
    <source>
    </source>
</evidence>
<proteinExistence type="inferred from homology"/>
<feature type="signal peptide" evidence="5">
    <location>
        <begin position="1"/>
        <end position="22"/>
    </location>
</feature>
<feature type="chain" id="PRO_0000024521" description="Circumsporozoite protein" evidence="5">
    <location>
        <begin position="23"/>
        <end position="355"/>
    </location>
</feature>
<feature type="chain" id="PRO_0000455474" description="Circumsporozoite protein C-terminus" evidence="3">
    <location>
        <begin status="unknown"/>
        <end position="355"/>
    </location>
</feature>
<feature type="propeptide" id="PRO_0000455475" description="Removed in mature form" evidence="5">
    <location>
        <begin position="356"/>
        <end position="378"/>
    </location>
</feature>
<feature type="repeat" description="1-1; truncated" evidence="11">
    <location>
        <begin position="97"/>
        <end position="102"/>
    </location>
</feature>
<feature type="repeat" description="1-2" evidence="11">
    <location>
        <begin position="103"/>
        <end position="111"/>
    </location>
</feature>
<feature type="repeat" description="1-3" evidence="11">
    <location>
        <begin position="112"/>
        <end position="120"/>
    </location>
</feature>
<feature type="repeat" description="1-4" evidence="11">
    <location>
        <begin position="121"/>
        <end position="129"/>
    </location>
</feature>
<feature type="repeat" description="1-5" evidence="11">
    <location>
        <begin position="130"/>
        <end position="138"/>
    </location>
</feature>
<feature type="repeat" description="1-6" evidence="11">
    <location>
        <begin position="139"/>
        <end position="147"/>
    </location>
</feature>
<feature type="repeat" description="1-7" evidence="11">
    <location>
        <begin position="148"/>
        <end position="156"/>
    </location>
</feature>
<feature type="repeat" description="1-8" evidence="11">
    <location>
        <begin position="157"/>
        <end position="165"/>
    </location>
</feature>
<feature type="repeat" description="1-9" evidence="11">
    <location>
        <begin position="166"/>
        <end position="174"/>
    </location>
</feature>
<feature type="repeat" description="1-10" evidence="11">
    <location>
        <begin position="175"/>
        <end position="183"/>
    </location>
</feature>
<feature type="repeat" description="1-11" evidence="11">
    <location>
        <begin position="184"/>
        <end position="191"/>
    </location>
</feature>
<feature type="repeat" description="2-1" evidence="11">
    <location>
        <begin position="193"/>
        <end position="208"/>
    </location>
</feature>
<feature type="repeat" description="2-2" evidence="11">
    <location>
        <begin position="209"/>
        <end position="224"/>
    </location>
</feature>
<feature type="repeat" description="2-3" evidence="11">
    <location>
        <begin position="225"/>
        <end position="240"/>
    </location>
</feature>
<feature type="repeat" description="2-4; approximate; truncated" evidence="11">
    <location>
        <begin position="241"/>
        <end position="251"/>
    </location>
</feature>
<feature type="repeat" description="2-5; approximate; truncated" evidence="11">
    <location>
        <begin position="252"/>
        <end position="260"/>
    </location>
</feature>
<feature type="repeat" description="2-6; approximate; truncated" evidence="11">
    <location>
        <begin position="261"/>
        <end position="268"/>
    </location>
</feature>
<feature type="domain" description="TSP type-1" evidence="6">
    <location>
        <begin position="304"/>
        <end position="356"/>
    </location>
</feature>
<feature type="region of interest" description="Disordered" evidence="7">
    <location>
        <begin position="50"/>
        <end position="288"/>
    </location>
</feature>
<feature type="region of interest" description="Required for the binding to heparan sulfate proteoglycans (HSPGs) on the surface of host hepatocytes" evidence="4">
    <location>
        <begin position="81"/>
        <end position="89"/>
    </location>
</feature>
<feature type="region of interest" description="Region I; contains the proteolytic cleavage site" evidence="3">
    <location>
        <begin position="92"/>
        <end position="96"/>
    </location>
</feature>
<feature type="region of interest" description="11 X 9 AA tandem repeats of P-[AE]-G-D-G-A-P-A-[AG]" evidence="11">
    <location>
        <begin position="97"/>
        <end position="191"/>
    </location>
</feature>
<feature type="region of interest" description="6 X 16 AA approximate tandem repeats of N-R-A-G-G-Q-P-A-A-G-G-N-Q-A-G-G" evidence="11">
    <location>
        <begin position="193"/>
        <end position="268"/>
    </location>
</feature>
<feature type="compositionally biased region" description="Basic and acidic residues" evidence="7">
    <location>
        <begin position="65"/>
        <end position="93"/>
    </location>
</feature>
<feature type="compositionally biased region" description="Low complexity" evidence="7">
    <location>
        <begin position="96"/>
        <end position="203"/>
    </location>
</feature>
<feature type="compositionally biased region" description="Low complexity" evidence="7">
    <location>
        <begin position="228"/>
        <end position="251"/>
    </location>
</feature>
<feature type="compositionally biased region" description="Gly residues" evidence="7">
    <location>
        <begin position="252"/>
        <end position="266"/>
    </location>
</feature>
<feature type="compositionally biased region" description="Gly residues" evidence="7">
    <location>
        <begin position="274"/>
        <end position="283"/>
    </location>
</feature>
<feature type="lipid moiety-binding region" description="GPI-anchor amidated cysteine" evidence="5">
    <location>
        <position position="355"/>
    </location>
</feature>
<feature type="glycosylation site" description="O-linked (Fuc) threonine" evidence="2">
    <location>
        <position position="319"/>
    </location>
</feature>
<feature type="disulfide bond" evidence="4">
    <location>
        <begin position="316"/>
        <end position="350"/>
    </location>
</feature>
<feature type="disulfide bond" evidence="4">
    <location>
        <begin position="320"/>
        <end position="355"/>
    </location>
</feature>
<name>CSP_PLACB</name>
<organism>
    <name type="scientific">Plasmodium cynomolgi (strain Berok)</name>
    <dbReference type="NCBI Taxonomy" id="5828"/>
    <lineage>
        <taxon>Eukaryota</taxon>
        <taxon>Sar</taxon>
        <taxon>Alveolata</taxon>
        <taxon>Apicomplexa</taxon>
        <taxon>Aconoidasida</taxon>
        <taxon>Haemosporida</taxon>
        <taxon>Plasmodiidae</taxon>
        <taxon>Plasmodium</taxon>
        <taxon>Plasmodium (Plasmodium)</taxon>
    </lineage>
</organism>
<accession>P08672</accession>
<dbReference type="EMBL" id="M15104">
    <property type="protein sequence ID" value="AAA29532.1"/>
    <property type="molecule type" value="Genomic_DNA"/>
</dbReference>
<dbReference type="PIR" id="D26255">
    <property type="entry name" value="OZZQAB"/>
</dbReference>
<dbReference type="SMR" id="P08672"/>
<dbReference type="GlyCosmos" id="P08672">
    <property type="glycosylation" value="1 site, No reported glycans"/>
</dbReference>
<dbReference type="GO" id="GO:0009986">
    <property type="term" value="C:cell surface"/>
    <property type="evidence" value="ECO:0007669"/>
    <property type="project" value="InterPro"/>
</dbReference>
<dbReference type="GO" id="GO:0005737">
    <property type="term" value="C:cytoplasm"/>
    <property type="evidence" value="ECO:0007669"/>
    <property type="project" value="UniProtKB-SubCell"/>
</dbReference>
<dbReference type="GO" id="GO:0005886">
    <property type="term" value="C:plasma membrane"/>
    <property type="evidence" value="ECO:0007669"/>
    <property type="project" value="UniProtKB-SubCell"/>
</dbReference>
<dbReference type="GO" id="GO:0098552">
    <property type="term" value="C:side of membrane"/>
    <property type="evidence" value="ECO:0007669"/>
    <property type="project" value="UniProtKB-KW"/>
</dbReference>
<dbReference type="Gene3D" id="2.20.100.10">
    <property type="entry name" value="Thrombospondin type-1 (TSP1) repeat"/>
    <property type="match status" value="1"/>
</dbReference>
<dbReference type="InterPro" id="IPR003067">
    <property type="entry name" value="Crcmsprzoite"/>
</dbReference>
<dbReference type="InterPro" id="IPR000884">
    <property type="entry name" value="TSP1_rpt"/>
</dbReference>
<dbReference type="InterPro" id="IPR036383">
    <property type="entry name" value="TSP1_rpt_sf"/>
</dbReference>
<dbReference type="Pfam" id="PF00090">
    <property type="entry name" value="TSP_1"/>
    <property type="match status" value="1"/>
</dbReference>
<dbReference type="PRINTS" id="PR01303">
    <property type="entry name" value="CRCMSPRZOITE"/>
</dbReference>
<dbReference type="SMART" id="SM00209">
    <property type="entry name" value="TSP1"/>
    <property type="match status" value="1"/>
</dbReference>
<dbReference type="SUPFAM" id="SSF82895">
    <property type="entry name" value="TSP-1 type 1 repeat"/>
    <property type="match status" value="1"/>
</dbReference>
<dbReference type="PROSITE" id="PS50092">
    <property type="entry name" value="TSP1"/>
    <property type="match status" value="1"/>
</dbReference>
<comment type="function">
    <text evidence="1 3">Essential sporozoite protein (By similarity). In the mosquito vector, required for sporozoite development in the oocyst, migration through the vector hemolymph and entry into the vector salivary glands (By similarity). In the vertebrate host, required for sporozoite migration through the host dermis and infection of host hepatocytes (By similarity). Binds to highly sulfated heparan sulfate proteoglycans (HSPGs) on the surface of host hepatocytes (By similarity).</text>
</comment>
<comment type="function">
    <molecule>Circumsporozoite protein C-terminus</molecule>
    <text evidence="3">In the vertebrate host, binds to highly sulfated heparan sulfate proteoglycans (HSPGs) on the surface of host hepatocytes and is required for sporozoite invasion of the host hepatocytes.</text>
</comment>
<comment type="subcellular location">
    <subcellularLocation>
        <location evidence="2">Cell membrane</location>
        <topology evidence="5">Lipid-anchor</topology>
        <topology evidence="5">GPI-anchor</topology>
    </subcellularLocation>
    <subcellularLocation>
        <location evidence="3">Cytoplasm</location>
    </subcellularLocation>
    <text evidence="3">Localizes to the cytoplasm and the cell membrane in oocysts at day 6 post infection and then gradually distributes over the entire cell surface of the sporoblast and the budding sporozoites.</text>
</comment>
<comment type="domain">
    <text evidence="3 4">The N-terminus is involved in the initial binding to heparan sulfate proteoglycans (HSPGs) on the surface of host hepatocytes (By similarity). The N-terminus masks the TSP type-1 (TSR) domain which maintains the sporozoites in a migratory state, enabling them to complete their journey to the salivary gland in the mosquito vector and then to the host liver. The unmasking of the TSP type-1 (TSR) domain when the sporozoite interacts with the host hepatocyte also protects sporozoites from host antibodies (By similarity).</text>
</comment>
<comment type="domain">
    <text evidence="3">The TSP type-1 (TSR) domain is required for sporozoite development and invasion. CSP has two conformational states, an adhesive conformation in which the TSP type-1 (TSR) domain is exposed and a nonadhesive conformation in which the TSR is masked by the N-terminus. TSR-exposed conformation occurs during sporozoite development in the oocyst in the mosquito vector and during host hepatocyte invasion. TSR-masked conformation occurs during sporozoite migration through the hemolymph to salivary glands in the mosquito vector and in the host dermis.</text>
</comment>
<comment type="domain">
    <text evidence="3">The GPI-anchor is essential for cell membrane localization and for sporozoite formation inside the oocyst.</text>
</comment>
<comment type="PTM">
    <text evidence="1 3">During host cell invasion, proteolytically cleaved at the cell membrane in the region I by a papain-like cysteine protease of parasite origin (By similarity). Cleavage is triggered by the sporozoite contact with highly sulfated heparan sulfate proteoglycans (HSPGs) present on the host hepatocyte cell surface (By similarity). Cleavage exposes the TSP type-1 (TSR) domain and is required for productive invasion of host hepatocytes but not for adhesion to the host cell membrane (By similarity). Cleavage is dispensable for sporozoite development in the oocyst, motility and for traversal of host and vector cells (By similarity).</text>
</comment>
<comment type="PTM">
    <text evidence="2">O-glycosylated; maybe by POFUT2.</text>
</comment>
<comment type="polymorphism">
    <text evidence="8">The sequence of the repeats varies across Plasmodium species and strains.</text>
</comment>
<comment type="similarity">
    <text evidence="10">Belongs to the plasmodium circumsporozoite protein family.</text>
</comment>
<protein>
    <recommendedName>
        <fullName evidence="9">Circumsporozoite protein</fullName>
        <shortName evidence="9">CS</shortName>
    </recommendedName>
    <component>
        <recommendedName>
            <fullName evidence="10">Circumsporozoite protein C-terminus</fullName>
        </recommendedName>
    </component>
</protein>
<sequence length="378" mass="36286">MKNFNLLVVSSILLVDLFPTNCGHNVHFSRAINLNGVSFNNVDASSLGAAQVRQSASRGRGLGENPKDEEGADKPKKKEEKKVEPKKPRENKLKQPPAGDGAPEGDGAPAAPAGDGAPAAPAGDGAPAAPAGDGAPAAPAGDGAPAAPAGDGAPAAPAGDGAPAAPAGDGAPAAPAGDGAPAAPAGDGAPAGNRAGGQPAAGGNQAGGNRAGGQPAAGGNQAGGNRAGGQPAAGGNQAGGQPAAGGNQAGAQAGGNQAGAQAGGANAGNKKAGEAGGNAGAGQGQNNEAANVPNAKLVKEYLDKIRSTLGVEWSPCSVTCGKGVRMRRKVSAANKKPEELDVNDLETEVCTMDKCAGIFNVVSNSLRLVILLVLALFN</sequence>